<keyword id="KW-0067">ATP-binding</keyword>
<keyword id="KW-0143">Chaperone</keyword>
<keyword id="KW-0963">Cytoplasm</keyword>
<keyword id="KW-0547">Nucleotide-binding</keyword>
<keyword id="KW-0539">Nucleus</keyword>
<keyword id="KW-0597">Phosphoprotein</keyword>
<keyword id="KW-1185">Reference proteome</keyword>
<keyword id="KW-0346">Stress response</keyword>
<comment type="function">
    <text evidence="1">Possesses chaperone activity in vitro where it inhibits aggregation of citrate synthase.</text>
</comment>
<comment type="subunit">
    <text evidence="1">Homodimer.</text>
</comment>
<comment type="subcellular location">
    <subcellularLocation>
        <location evidence="1">Cytoplasm</location>
    </subcellularLocation>
    <subcellularLocation>
        <location evidence="1">Nucleus</location>
    </subcellularLocation>
    <text evidence="1">May translocate to the nucleus after heat shock.</text>
</comment>
<comment type="similarity">
    <text evidence="2">Belongs to the heat shock protein 70 family.</text>
</comment>
<sequence>SVVGIDLGFLNCYIAVARSGGIETIANEYSDRCTPACISLGSRSQIVTNVRNTIHGFKKIRLPYELQKMPNGSTGVKVRLKVLATTFDPYLGGRVEPPLKSVMDQANLQREDINSIEIVGGATRIPAVKEQVTRFFLKDISTTLNADEAVARNHPAPFSKSIDLPIQSSLYRNAVEEYVYDFRDKFITPEDMNKYGQPIQMKYVEHEERPK</sequence>
<organism>
    <name type="scientific">Mesocricetus auratus</name>
    <name type="common">Golden hamster</name>
    <dbReference type="NCBI Taxonomy" id="10036"/>
    <lineage>
        <taxon>Eukaryota</taxon>
        <taxon>Metazoa</taxon>
        <taxon>Chordata</taxon>
        <taxon>Craniata</taxon>
        <taxon>Vertebrata</taxon>
        <taxon>Euteleostomi</taxon>
        <taxon>Mammalia</taxon>
        <taxon>Eutheria</taxon>
        <taxon>Euarchontoglires</taxon>
        <taxon>Glires</taxon>
        <taxon>Rodentia</taxon>
        <taxon>Myomorpha</taxon>
        <taxon>Muroidea</taxon>
        <taxon>Cricetidae</taxon>
        <taxon>Cricetinae</taxon>
        <taxon>Mesocricetus</taxon>
    </lineage>
</organism>
<feature type="chain" id="PRO_0000394416" description="Heat shock 70 kDa protein 4L">
    <location>
        <begin position="1" status="less than"/>
        <end position="211" status="greater than"/>
    </location>
</feature>
<feature type="modified residue" description="Phosphoserine" evidence="1">
    <location>
        <position position="161"/>
    </location>
</feature>
<feature type="non-consecutive residues" evidence="3">
    <location>
        <begin position="43"/>
        <end position="44"/>
    </location>
</feature>
<feature type="non-consecutive residues" evidence="3">
    <location>
        <begin position="59"/>
        <end position="60"/>
    </location>
</feature>
<feature type="non-consecutive residues" evidence="3">
    <location>
        <begin position="79"/>
        <end position="80"/>
    </location>
</feature>
<feature type="non-consecutive residues" evidence="3">
    <location>
        <begin position="94"/>
        <end position="95"/>
    </location>
</feature>
<feature type="non-consecutive residues" evidence="3">
    <location>
        <begin position="152"/>
        <end position="153"/>
    </location>
</feature>
<feature type="non-consecutive residues" evidence="3">
    <location>
        <begin position="160"/>
        <end position="161"/>
    </location>
</feature>
<feature type="non-consecutive residues" evidence="3">
    <location>
        <begin position="172"/>
        <end position="173"/>
    </location>
</feature>
<feature type="non-consecutive residues" evidence="3">
    <location>
        <begin position="185"/>
        <end position="186"/>
    </location>
</feature>
<feature type="non-consecutive residues" evidence="3">
    <location>
        <begin position="194"/>
        <end position="195"/>
    </location>
</feature>
<feature type="non-terminal residue">
    <location>
        <position position="1"/>
    </location>
</feature>
<feature type="non-terminal residue">
    <location>
        <position position="211"/>
    </location>
</feature>
<name>HS74L_MESAU</name>
<evidence type="ECO:0000250" key="1">
    <source>
        <dbReference type="UniProtKB" id="O95757"/>
    </source>
</evidence>
<evidence type="ECO:0000255" key="2"/>
<evidence type="ECO:0000305" key="3"/>
<reference key="1">
    <citation type="journal article" date="2010" name="Asian J. Androl.">
        <title>Glucose-regulated protein precursor (GRP78) and tumor rejection antigen (GP96) are unique to hamster caput epididymal spermatozoa.</title>
        <authorList>
            <person name="Kameshwari D.B."/>
            <person name="Bhande S."/>
            <person name="Sundaram C.S."/>
            <person name="Kota V."/>
            <person name="Siva A.B."/>
            <person name="Shivaji S."/>
        </authorList>
    </citation>
    <scope>IDENTIFICATION BY MASS SPECTROMETRY</scope>
</reference>
<protein>
    <recommendedName>
        <fullName evidence="1">Heat shock 70 kDa protein 4L</fullName>
    </recommendedName>
    <alternativeName>
        <fullName evidence="1">Heat shock 70-related protein APG-1</fullName>
    </alternativeName>
    <alternativeName>
        <fullName evidence="1">Osmotic stress protein 94</fullName>
    </alternativeName>
</protein>
<dbReference type="eggNOG" id="KOG0103">
    <property type="taxonomic scope" value="Eukaryota"/>
</dbReference>
<dbReference type="Proteomes" id="UP000189706">
    <property type="component" value="Unplaced"/>
</dbReference>
<dbReference type="GO" id="GO:0005829">
    <property type="term" value="C:cytosol"/>
    <property type="evidence" value="ECO:0007669"/>
    <property type="project" value="TreeGrafter"/>
</dbReference>
<dbReference type="GO" id="GO:0005634">
    <property type="term" value="C:nucleus"/>
    <property type="evidence" value="ECO:0007669"/>
    <property type="project" value="UniProtKB-SubCell"/>
</dbReference>
<dbReference type="GO" id="GO:0005524">
    <property type="term" value="F:ATP binding"/>
    <property type="evidence" value="ECO:0007669"/>
    <property type="project" value="UniProtKB-KW"/>
</dbReference>
<dbReference type="GO" id="GO:0140662">
    <property type="term" value="F:ATP-dependent protein folding chaperone"/>
    <property type="evidence" value="ECO:0007669"/>
    <property type="project" value="InterPro"/>
</dbReference>
<dbReference type="FunFam" id="3.30.420.40:FF:000243">
    <property type="entry name" value="Heat shock protein 105 kDa"/>
    <property type="match status" value="1"/>
</dbReference>
<dbReference type="Gene3D" id="3.30.420.40">
    <property type="match status" value="3"/>
</dbReference>
<dbReference type="InterPro" id="IPR043129">
    <property type="entry name" value="ATPase_NBD"/>
</dbReference>
<dbReference type="InterPro" id="IPR018181">
    <property type="entry name" value="Heat_shock_70_CS"/>
</dbReference>
<dbReference type="InterPro" id="IPR013126">
    <property type="entry name" value="Hsp_70_fam"/>
</dbReference>
<dbReference type="PANTHER" id="PTHR45639:SF5">
    <property type="entry name" value="HEAT SHOCK 70 KDA PROTEIN 4L"/>
    <property type="match status" value="1"/>
</dbReference>
<dbReference type="PANTHER" id="PTHR45639">
    <property type="entry name" value="HSC70CB, ISOFORM G-RELATED"/>
    <property type="match status" value="1"/>
</dbReference>
<dbReference type="Pfam" id="PF00012">
    <property type="entry name" value="HSP70"/>
    <property type="match status" value="2"/>
</dbReference>
<dbReference type="SUPFAM" id="SSF53067">
    <property type="entry name" value="Actin-like ATPase domain"/>
    <property type="match status" value="2"/>
</dbReference>
<dbReference type="PROSITE" id="PS01036">
    <property type="entry name" value="HSP70_3"/>
    <property type="match status" value="1"/>
</dbReference>
<gene>
    <name evidence="1" type="primary">HSPA4L</name>
    <name evidence="1" type="synonym">APG1</name>
    <name evidence="1" type="synonym">HSPH3</name>
    <name evidence="1" type="synonym">OSP94</name>
</gene>
<accession>P86265</accession>
<proteinExistence type="evidence at protein level"/>